<protein>
    <recommendedName>
        <fullName>V-type proton ATPase subunit C</fullName>
        <shortName>V-ATPase subunit C</shortName>
    </recommendedName>
    <alternativeName>
        <fullName>Vacuolar proton pump subunit C</fullName>
    </alternativeName>
</protein>
<reference key="1">
    <citation type="submission" date="1995-05" db="EMBL/GenBank/DDBJ databases">
        <authorList>
            <person name="Gerisch G."/>
            <person name="Westphal M."/>
        </authorList>
    </citation>
    <scope>NUCLEOTIDE SEQUENCE [MRNA]</scope>
    <source>
        <strain>AX3</strain>
    </source>
</reference>
<reference key="2">
    <citation type="journal article" date="2005" name="Nature">
        <title>The genome of the social amoeba Dictyostelium discoideum.</title>
        <authorList>
            <person name="Eichinger L."/>
            <person name="Pachebat J.A."/>
            <person name="Gloeckner G."/>
            <person name="Rajandream M.A."/>
            <person name="Sucgang R."/>
            <person name="Berriman M."/>
            <person name="Song J."/>
            <person name="Olsen R."/>
            <person name="Szafranski K."/>
            <person name="Xu Q."/>
            <person name="Tunggal B."/>
            <person name="Kummerfeld S."/>
            <person name="Madera M."/>
            <person name="Konfortov B.A."/>
            <person name="Rivero F."/>
            <person name="Bankier A.T."/>
            <person name="Lehmann R."/>
            <person name="Hamlin N."/>
            <person name="Davies R."/>
            <person name="Gaudet P."/>
            <person name="Fey P."/>
            <person name="Pilcher K."/>
            <person name="Chen G."/>
            <person name="Saunders D."/>
            <person name="Sodergren E.J."/>
            <person name="Davis P."/>
            <person name="Kerhornou A."/>
            <person name="Nie X."/>
            <person name="Hall N."/>
            <person name="Anjard C."/>
            <person name="Hemphill L."/>
            <person name="Bason N."/>
            <person name="Farbrother P."/>
            <person name="Desany B."/>
            <person name="Just E."/>
            <person name="Morio T."/>
            <person name="Rost R."/>
            <person name="Churcher C.M."/>
            <person name="Cooper J."/>
            <person name="Haydock S."/>
            <person name="van Driessche N."/>
            <person name="Cronin A."/>
            <person name="Goodhead I."/>
            <person name="Muzny D.M."/>
            <person name="Mourier T."/>
            <person name="Pain A."/>
            <person name="Lu M."/>
            <person name="Harper D."/>
            <person name="Lindsay R."/>
            <person name="Hauser H."/>
            <person name="James K.D."/>
            <person name="Quiles M."/>
            <person name="Madan Babu M."/>
            <person name="Saito T."/>
            <person name="Buchrieser C."/>
            <person name="Wardroper A."/>
            <person name="Felder M."/>
            <person name="Thangavelu M."/>
            <person name="Johnson D."/>
            <person name="Knights A."/>
            <person name="Loulseged H."/>
            <person name="Mungall K.L."/>
            <person name="Oliver K."/>
            <person name="Price C."/>
            <person name="Quail M.A."/>
            <person name="Urushihara H."/>
            <person name="Hernandez J."/>
            <person name="Rabbinowitsch E."/>
            <person name="Steffen D."/>
            <person name="Sanders M."/>
            <person name="Ma J."/>
            <person name="Kohara Y."/>
            <person name="Sharp S."/>
            <person name="Simmonds M.N."/>
            <person name="Spiegler S."/>
            <person name="Tivey A."/>
            <person name="Sugano S."/>
            <person name="White B."/>
            <person name="Walker D."/>
            <person name="Woodward J.R."/>
            <person name="Winckler T."/>
            <person name="Tanaka Y."/>
            <person name="Shaulsky G."/>
            <person name="Schleicher M."/>
            <person name="Weinstock G.M."/>
            <person name="Rosenthal A."/>
            <person name="Cox E.C."/>
            <person name="Chisholm R.L."/>
            <person name="Gibbs R.A."/>
            <person name="Loomis W.F."/>
            <person name="Platzer M."/>
            <person name="Kay R.R."/>
            <person name="Williams J.G."/>
            <person name="Dear P.H."/>
            <person name="Noegel A.A."/>
            <person name="Barrell B.G."/>
            <person name="Kuspa A."/>
        </authorList>
    </citation>
    <scope>NUCLEOTIDE SEQUENCE [LARGE SCALE GENOMIC DNA]</scope>
    <source>
        <strain>AX4</strain>
    </source>
</reference>
<accession>P54648</accession>
<accession>Q54PH0</accession>
<gene>
    <name type="primary">vatC</name>
    <name type="ORF">DDB_G0284473</name>
</gene>
<evidence type="ECO:0000250" key="1"/>
<evidence type="ECO:0000305" key="2"/>
<dbReference type="EMBL" id="L41839">
    <property type="protein sequence ID" value="AAA65499.1"/>
    <property type="molecule type" value="mRNA"/>
</dbReference>
<dbReference type="EMBL" id="AAFI02000066">
    <property type="protein sequence ID" value="EAL65163.1"/>
    <property type="molecule type" value="Genomic_DNA"/>
</dbReference>
<dbReference type="RefSeq" id="XP_638562.1">
    <property type="nucleotide sequence ID" value="XM_633470.1"/>
</dbReference>
<dbReference type="SMR" id="P54648"/>
<dbReference type="FunCoup" id="P54648">
    <property type="interactions" value="342"/>
</dbReference>
<dbReference type="STRING" id="44689.P54648"/>
<dbReference type="PaxDb" id="44689-DDB0191419"/>
<dbReference type="ABCD" id="P54648">
    <property type="antibodies" value="1 sequenced antibody"/>
</dbReference>
<dbReference type="EnsemblProtists" id="EAL65163">
    <property type="protein sequence ID" value="EAL65163"/>
    <property type="gene ID" value="DDB_G0284473"/>
</dbReference>
<dbReference type="GeneID" id="8624654"/>
<dbReference type="KEGG" id="ddi:DDB_G0284473"/>
<dbReference type="dictyBase" id="DDB_G0284473">
    <property type="gene designation" value="vatC"/>
</dbReference>
<dbReference type="VEuPathDB" id="AmoebaDB:DDB_G0284473"/>
<dbReference type="eggNOG" id="KOG2909">
    <property type="taxonomic scope" value="Eukaryota"/>
</dbReference>
<dbReference type="HOGENOM" id="CLU_017554_3_0_1"/>
<dbReference type="InParanoid" id="P54648"/>
<dbReference type="OMA" id="VMIWIHV"/>
<dbReference type="PhylomeDB" id="P54648"/>
<dbReference type="Reactome" id="R-DDI-1222556">
    <property type="pathway name" value="ROS and RNS production in phagocytes"/>
</dbReference>
<dbReference type="Reactome" id="R-DDI-77387">
    <property type="pathway name" value="Insulin receptor recycling"/>
</dbReference>
<dbReference type="Reactome" id="R-DDI-917977">
    <property type="pathway name" value="Transferrin endocytosis and recycling"/>
</dbReference>
<dbReference type="Reactome" id="R-DDI-9639288">
    <property type="pathway name" value="Amino acids regulate mTORC1"/>
</dbReference>
<dbReference type="PRO" id="PR:P54648"/>
<dbReference type="Proteomes" id="UP000002195">
    <property type="component" value="Chromosome 4"/>
</dbReference>
<dbReference type="GO" id="GO:0031164">
    <property type="term" value="C:contractile vacuolar membrane"/>
    <property type="evidence" value="ECO:0000304"/>
    <property type="project" value="dictyBase"/>
</dbReference>
<dbReference type="GO" id="GO:0005769">
    <property type="term" value="C:early endosome"/>
    <property type="evidence" value="ECO:0000314"/>
    <property type="project" value="dictyBase"/>
</dbReference>
<dbReference type="GO" id="GO:0005764">
    <property type="term" value="C:lysosome"/>
    <property type="evidence" value="ECO:0000314"/>
    <property type="project" value="dictyBase"/>
</dbReference>
<dbReference type="GO" id="GO:0140220">
    <property type="term" value="C:pathogen-containing vacuole"/>
    <property type="evidence" value="ECO:0007005"/>
    <property type="project" value="dictyBase"/>
</dbReference>
<dbReference type="GO" id="GO:0000221">
    <property type="term" value="C:vacuolar proton-transporting V-type ATPase, V1 domain"/>
    <property type="evidence" value="ECO:0000318"/>
    <property type="project" value="GO_Central"/>
</dbReference>
<dbReference type="GO" id="GO:0046961">
    <property type="term" value="F:proton-transporting ATPase activity, rotational mechanism"/>
    <property type="evidence" value="ECO:0000318"/>
    <property type="project" value="GO_Central"/>
</dbReference>
<dbReference type="CDD" id="cd14785">
    <property type="entry name" value="V-ATPase_C"/>
    <property type="match status" value="1"/>
</dbReference>
<dbReference type="FunFam" id="3.30.70.100:FF:000002">
    <property type="entry name" value="V-type proton ATPase subunit C"/>
    <property type="match status" value="1"/>
</dbReference>
<dbReference type="Gene3D" id="3.30.70.100">
    <property type="match status" value="1"/>
</dbReference>
<dbReference type="Gene3D" id="1.20.1460.10">
    <property type="entry name" value="subunit c (vma5p) of the yeast v-atpase, domain 2"/>
    <property type="match status" value="1"/>
</dbReference>
<dbReference type="Gene3D" id="3.30.70.1180">
    <property type="entry name" value="Vacuolar atp synthase subunit c, domain 1"/>
    <property type="match status" value="1"/>
</dbReference>
<dbReference type="InterPro" id="IPR004907">
    <property type="entry name" value="ATPase_V1-cplx_csu"/>
</dbReference>
<dbReference type="InterPro" id="IPR036132">
    <property type="entry name" value="Vac_ATP_synth_c_sf"/>
</dbReference>
<dbReference type="PANTHER" id="PTHR10137">
    <property type="entry name" value="V-TYPE PROTON ATPASE SUBUNIT C"/>
    <property type="match status" value="1"/>
</dbReference>
<dbReference type="PANTHER" id="PTHR10137:SF0">
    <property type="entry name" value="V-TYPE PROTON ATPASE SUBUNIT C"/>
    <property type="match status" value="1"/>
</dbReference>
<dbReference type="Pfam" id="PF03223">
    <property type="entry name" value="V-ATPase_C"/>
    <property type="match status" value="1"/>
</dbReference>
<dbReference type="SUPFAM" id="SSF118203">
    <property type="entry name" value="Vacuolar ATP synthase subunit C"/>
    <property type="match status" value="1"/>
</dbReference>
<feature type="chain" id="PRO_0000209352" description="V-type proton ATPase subunit C">
    <location>
        <begin position="1"/>
        <end position="368"/>
    </location>
</feature>
<organism>
    <name type="scientific">Dictyostelium discoideum</name>
    <name type="common">Social amoeba</name>
    <dbReference type="NCBI Taxonomy" id="44689"/>
    <lineage>
        <taxon>Eukaryota</taxon>
        <taxon>Amoebozoa</taxon>
        <taxon>Evosea</taxon>
        <taxon>Eumycetozoa</taxon>
        <taxon>Dictyostelia</taxon>
        <taxon>Dictyosteliales</taxon>
        <taxon>Dictyosteliaceae</taxon>
        <taxon>Dictyostelium</taxon>
    </lineage>
</organism>
<comment type="function">
    <text evidence="1">Subunit of the peripheral V1 complex of vacuolar ATPase. Subunit C is necessary for the assembly of the catalytic sector of the enzyme and is likely to have a specific function in its catalytic activity. V-ATPase is responsible for acidifying a variety of intracellular compartments in eukaryotic cells (By similarity).</text>
</comment>
<comment type="subunit">
    <text evidence="1">V-ATPase is a heteromultimeric enzyme composed of a peripheral catalytic V1 complex (components A to H) attached to an integral membrane V0 proton pore complex (components: a, c, c', c'' and d).</text>
</comment>
<comment type="similarity">
    <text evidence="2">Belongs to the V-ATPase C subunit family.</text>
</comment>
<sequence>MSETQEFWLISAPNLPGADIFDQVNQKTAKENSLSENKKFNTPALRVGTLNSLITLNDELQKIDTIVESTTKKIARQLVDLVGTKPGKDKSLSINGHTIPQYLQQFAWDDAKYNLKLSLQEIVEKISSAVSKIDDDLKIKSSEYSTLSSSVASEERKASGNLQVRTLNDLITADNIVQTDYFTTAFVVIPKQSEKEFLACYETISDFVLGRSAKRVAQDNDYFLYSVILFKKFYENFKTKIIEKKWVVRDFKLEDNKPTQERSKLTEDKKNCRTSLIRWCRLNFPEAFMAWVHLKVVRVFVESVLRFGIPFNFQAILMKPQKGADKKVRDILFDQFKYLGSAHISGKNETDDSEKFYPYISVSVNWEN</sequence>
<keyword id="KW-0375">Hydrogen ion transport</keyword>
<keyword id="KW-0406">Ion transport</keyword>
<keyword id="KW-1185">Reference proteome</keyword>
<keyword id="KW-0813">Transport</keyword>
<proteinExistence type="evidence at transcript level"/>
<name>VATC_DICDI</name>